<reference key="1">
    <citation type="submission" date="2007-06" db="EMBL/GenBank/DDBJ databases">
        <title>Complete sequence of Marinomonas sp. MWYL1.</title>
        <authorList>
            <consortium name="US DOE Joint Genome Institute"/>
            <person name="Copeland A."/>
            <person name="Lucas S."/>
            <person name="Lapidus A."/>
            <person name="Barry K."/>
            <person name="Glavina del Rio T."/>
            <person name="Dalin E."/>
            <person name="Tice H."/>
            <person name="Pitluck S."/>
            <person name="Kiss H."/>
            <person name="Brettin T."/>
            <person name="Bruce D."/>
            <person name="Detter J.C."/>
            <person name="Han C."/>
            <person name="Schmutz J."/>
            <person name="Larimer F."/>
            <person name="Land M."/>
            <person name="Hauser L."/>
            <person name="Kyrpides N."/>
            <person name="Kim E."/>
            <person name="Johnston A.W.B."/>
            <person name="Todd J.D."/>
            <person name="Rogers R."/>
            <person name="Wexler M."/>
            <person name="Bond P.L."/>
            <person name="Li Y."/>
            <person name="Richardson P."/>
        </authorList>
    </citation>
    <scope>NUCLEOTIDE SEQUENCE [LARGE SCALE GENOMIC DNA]</scope>
    <source>
        <strain>MWYL1</strain>
    </source>
</reference>
<feature type="chain" id="PRO_1000097083" description="Pantothenate synthetase">
    <location>
        <begin position="1"/>
        <end position="282"/>
    </location>
</feature>
<feature type="active site" description="Proton donor" evidence="1">
    <location>
        <position position="37"/>
    </location>
</feature>
<feature type="binding site" evidence="1">
    <location>
        <begin position="30"/>
        <end position="37"/>
    </location>
    <ligand>
        <name>ATP</name>
        <dbReference type="ChEBI" id="CHEBI:30616"/>
    </ligand>
</feature>
<feature type="binding site" evidence="1">
    <location>
        <position position="61"/>
    </location>
    <ligand>
        <name>(R)-pantoate</name>
        <dbReference type="ChEBI" id="CHEBI:15980"/>
    </ligand>
</feature>
<feature type="binding site" evidence="1">
    <location>
        <position position="61"/>
    </location>
    <ligand>
        <name>beta-alanine</name>
        <dbReference type="ChEBI" id="CHEBI:57966"/>
    </ligand>
</feature>
<feature type="binding site" evidence="1">
    <location>
        <begin position="149"/>
        <end position="152"/>
    </location>
    <ligand>
        <name>ATP</name>
        <dbReference type="ChEBI" id="CHEBI:30616"/>
    </ligand>
</feature>
<feature type="binding site" evidence="1">
    <location>
        <position position="155"/>
    </location>
    <ligand>
        <name>(R)-pantoate</name>
        <dbReference type="ChEBI" id="CHEBI:15980"/>
    </ligand>
</feature>
<feature type="binding site" evidence="1">
    <location>
        <position position="178"/>
    </location>
    <ligand>
        <name>ATP</name>
        <dbReference type="ChEBI" id="CHEBI:30616"/>
    </ligand>
</feature>
<feature type="binding site" evidence="1">
    <location>
        <begin position="186"/>
        <end position="189"/>
    </location>
    <ligand>
        <name>ATP</name>
        <dbReference type="ChEBI" id="CHEBI:30616"/>
    </ligand>
</feature>
<accession>A6W2I4</accession>
<sequence>MKTFHTVAELRTALKIERLKDKKIVFVPTMGNLHDGHMSLIRKAKEEGDIIVSSIFVNPMQFSDQSDLERYPKTLEEDKRVLEANGCNYLFAPDALEMYPDGKRSQTQIEVVGISDILCGASRPGHFVGVSTVVTKLFNIVQPDTAIFGNKDFQQLKVIQDMVRDLSSNVRIIGVDTARNEDGLAMSSRNGYLTEEERRIAPTIYQTLLWAKEALLENRASHEDICEQAQQKLEAAGFRRDYFEIRAQENLQTPSEEEKRLVILTAAYLGKARLIDNLRVEL</sequence>
<comment type="function">
    <text evidence="1">Catalyzes the condensation of pantoate with beta-alanine in an ATP-dependent reaction via a pantoyl-adenylate intermediate.</text>
</comment>
<comment type="catalytic activity">
    <reaction evidence="1">
        <text>(R)-pantoate + beta-alanine + ATP = (R)-pantothenate + AMP + diphosphate + H(+)</text>
        <dbReference type="Rhea" id="RHEA:10912"/>
        <dbReference type="ChEBI" id="CHEBI:15378"/>
        <dbReference type="ChEBI" id="CHEBI:15980"/>
        <dbReference type="ChEBI" id="CHEBI:29032"/>
        <dbReference type="ChEBI" id="CHEBI:30616"/>
        <dbReference type="ChEBI" id="CHEBI:33019"/>
        <dbReference type="ChEBI" id="CHEBI:57966"/>
        <dbReference type="ChEBI" id="CHEBI:456215"/>
        <dbReference type="EC" id="6.3.2.1"/>
    </reaction>
</comment>
<comment type="pathway">
    <text evidence="1">Cofactor biosynthesis; (R)-pantothenate biosynthesis; (R)-pantothenate from (R)-pantoate and beta-alanine: step 1/1.</text>
</comment>
<comment type="subunit">
    <text evidence="1">Homodimer.</text>
</comment>
<comment type="subcellular location">
    <subcellularLocation>
        <location evidence="1">Cytoplasm</location>
    </subcellularLocation>
</comment>
<comment type="miscellaneous">
    <text evidence="1">The reaction proceeds by a bi uni uni bi ping pong mechanism.</text>
</comment>
<comment type="similarity">
    <text evidence="1">Belongs to the pantothenate synthetase family.</text>
</comment>
<dbReference type="EC" id="6.3.2.1" evidence="1"/>
<dbReference type="EMBL" id="CP000749">
    <property type="protein sequence ID" value="ABR72913.1"/>
    <property type="molecule type" value="Genomic_DNA"/>
</dbReference>
<dbReference type="SMR" id="A6W2I4"/>
<dbReference type="STRING" id="400668.Mmwyl1_4017"/>
<dbReference type="KEGG" id="mmw:Mmwyl1_4017"/>
<dbReference type="eggNOG" id="COG0414">
    <property type="taxonomic scope" value="Bacteria"/>
</dbReference>
<dbReference type="HOGENOM" id="CLU_047148_0_0_6"/>
<dbReference type="OrthoDB" id="9773087at2"/>
<dbReference type="UniPathway" id="UPA00028">
    <property type="reaction ID" value="UER00005"/>
</dbReference>
<dbReference type="GO" id="GO:0005829">
    <property type="term" value="C:cytosol"/>
    <property type="evidence" value="ECO:0007669"/>
    <property type="project" value="TreeGrafter"/>
</dbReference>
<dbReference type="GO" id="GO:0005524">
    <property type="term" value="F:ATP binding"/>
    <property type="evidence" value="ECO:0007669"/>
    <property type="project" value="UniProtKB-KW"/>
</dbReference>
<dbReference type="GO" id="GO:0004592">
    <property type="term" value="F:pantoate-beta-alanine ligase activity"/>
    <property type="evidence" value="ECO:0007669"/>
    <property type="project" value="UniProtKB-UniRule"/>
</dbReference>
<dbReference type="GO" id="GO:0015940">
    <property type="term" value="P:pantothenate biosynthetic process"/>
    <property type="evidence" value="ECO:0007669"/>
    <property type="project" value="UniProtKB-UniRule"/>
</dbReference>
<dbReference type="CDD" id="cd00560">
    <property type="entry name" value="PanC"/>
    <property type="match status" value="1"/>
</dbReference>
<dbReference type="FunFam" id="3.30.1300.10:FF:000001">
    <property type="entry name" value="Pantothenate synthetase"/>
    <property type="match status" value="1"/>
</dbReference>
<dbReference type="FunFam" id="3.40.50.620:FF:000013">
    <property type="entry name" value="Pantothenate synthetase"/>
    <property type="match status" value="1"/>
</dbReference>
<dbReference type="Gene3D" id="3.40.50.620">
    <property type="entry name" value="HUPs"/>
    <property type="match status" value="1"/>
</dbReference>
<dbReference type="Gene3D" id="3.30.1300.10">
    <property type="entry name" value="Pantoate-beta-alanine ligase, C-terminal domain"/>
    <property type="match status" value="1"/>
</dbReference>
<dbReference type="HAMAP" id="MF_00158">
    <property type="entry name" value="PanC"/>
    <property type="match status" value="1"/>
</dbReference>
<dbReference type="InterPro" id="IPR004821">
    <property type="entry name" value="Cyt_trans-like"/>
</dbReference>
<dbReference type="InterPro" id="IPR003721">
    <property type="entry name" value="Pantoate_ligase"/>
</dbReference>
<dbReference type="InterPro" id="IPR042176">
    <property type="entry name" value="Pantoate_ligase_C"/>
</dbReference>
<dbReference type="InterPro" id="IPR014729">
    <property type="entry name" value="Rossmann-like_a/b/a_fold"/>
</dbReference>
<dbReference type="NCBIfam" id="TIGR00125">
    <property type="entry name" value="cyt_tran_rel"/>
    <property type="match status" value="1"/>
</dbReference>
<dbReference type="NCBIfam" id="TIGR00018">
    <property type="entry name" value="panC"/>
    <property type="match status" value="1"/>
</dbReference>
<dbReference type="PANTHER" id="PTHR21299">
    <property type="entry name" value="CYTIDYLATE KINASE/PANTOATE-BETA-ALANINE LIGASE"/>
    <property type="match status" value="1"/>
</dbReference>
<dbReference type="PANTHER" id="PTHR21299:SF1">
    <property type="entry name" value="PANTOATE--BETA-ALANINE LIGASE"/>
    <property type="match status" value="1"/>
</dbReference>
<dbReference type="Pfam" id="PF02569">
    <property type="entry name" value="Pantoate_ligase"/>
    <property type="match status" value="1"/>
</dbReference>
<dbReference type="SUPFAM" id="SSF52374">
    <property type="entry name" value="Nucleotidylyl transferase"/>
    <property type="match status" value="1"/>
</dbReference>
<evidence type="ECO:0000255" key="1">
    <source>
        <dbReference type="HAMAP-Rule" id="MF_00158"/>
    </source>
</evidence>
<gene>
    <name evidence="1" type="primary">panC</name>
    <name type="ordered locus">Mmwyl1_4017</name>
</gene>
<protein>
    <recommendedName>
        <fullName evidence="1">Pantothenate synthetase</fullName>
        <shortName evidence="1">PS</shortName>
        <ecNumber evidence="1">6.3.2.1</ecNumber>
    </recommendedName>
    <alternativeName>
        <fullName evidence="1">Pantoate--beta-alanine ligase</fullName>
    </alternativeName>
    <alternativeName>
        <fullName evidence="1">Pantoate-activating enzyme</fullName>
    </alternativeName>
</protein>
<organism>
    <name type="scientific">Marinomonas sp. (strain MWYL1)</name>
    <dbReference type="NCBI Taxonomy" id="400668"/>
    <lineage>
        <taxon>Bacteria</taxon>
        <taxon>Pseudomonadati</taxon>
        <taxon>Pseudomonadota</taxon>
        <taxon>Gammaproteobacteria</taxon>
        <taxon>Oceanospirillales</taxon>
        <taxon>Oceanospirillaceae</taxon>
        <taxon>Marinomonas</taxon>
    </lineage>
</organism>
<proteinExistence type="inferred from homology"/>
<keyword id="KW-0067">ATP-binding</keyword>
<keyword id="KW-0963">Cytoplasm</keyword>
<keyword id="KW-0436">Ligase</keyword>
<keyword id="KW-0547">Nucleotide-binding</keyword>
<keyword id="KW-0566">Pantothenate biosynthesis</keyword>
<name>PANC_MARMS</name>